<organism>
    <name type="scientific">Acetivibrio thermocellus (strain ATCC 27405 / DSM 1237 / JCM 9322 / NBRC 103400 / NCIMB 10682 / NRRL B-4536 / VPI 7372)</name>
    <name type="common">Clostridium thermocellum</name>
    <dbReference type="NCBI Taxonomy" id="203119"/>
    <lineage>
        <taxon>Bacteria</taxon>
        <taxon>Bacillati</taxon>
        <taxon>Bacillota</taxon>
        <taxon>Clostridia</taxon>
        <taxon>Eubacteriales</taxon>
        <taxon>Oscillospiraceae</taxon>
        <taxon>Acetivibrio</taxon>
    </lineage>
</organism>
<comment type="function">
    <text evidence="1">One of the primary rRNA binding proteins. Required for association of the 30S and 50S subunits to form the 70S ribosome, for tRNA binding and peptide bond formation. It has been suggested to have peptidyltransferase activity; this is somewhat controversial. Makes several contacts with the 16S rRNA in the 70S ribosome.</text>
</comment>
<comment type="subunit">
    <text evidence="1">Part of the 50S ribosomal subunit. Forms a bridge to the 30S subunit in the 70S ribosome.</text>
</comment>
<comment type="similarity">
    <text evidence="1">Belongs to the universal ribosomal protein uL2 family.</text>
</comment>
<dbReference type="EMBL" id="CP000568">
    <property type="protein sequence ID" value="ABN54104.1"/>
    <property type="molecule type" value="Genomic_DNA"/>
</dbReference>
<dbReference type="RefSeq" id="WP_003514628.1">
    <property type="nucleotide sequence ID" value="NC_009012.1"/>
</dbReference>
<dbReference type="SMR" id="A3DJH5"/>
<dbReference type="STRING" id="203119.Cthe_2906"/>
<dbReference type="GeneID" id="35805510"/>
<dbReference type="KEGG" id="cth:Cthe_2906"/>
<dbReference type="eggNOG" id="COG0090">
    <property type="taxonomic scope" value="Bacteria"/>
</dbReference>
<dbReference type="HOGENOM" id="CLU_036235_2_1_9"/>
<dbReference type="OrthoDB" id="9778722at2"/>
<dbReference type="Proteomes" id="UP000002145">
    <property type="component" value="Chromosome"/>
</dbReference>
<dbReference type="GO" id="GO:0015934">
    <property type="term" value="C:large ribosomal subunit"/>
    <property type="evidence" value="ECO:0007669"/>
    <property type="project" value="InterPro"/>
</dbReference>
<dbReference type="GO" id="GO:0019843">
    <property type="term" value="F:rRNA binding"/>
    <property type="evidence" value="ECO:0007669"/>
    <property type="project" value="UniProtKB-UniRule"/>
</dbReference>
<dbReference type="GO" id="GO:0003735">
    <property type="term" value="F:structural constituent of ribosome"/>
    <property type="evidence" value="ECO:0007669"/>
    <property type="project" value="InterPro"/>
</dbReference>
<dbReference type="GO" id="GO:0016740">
    <property type="term" value="F:transferase activity"/>
    <property type="evidence" value="ECO:0007669"/>
    <property type="project" value="InterPro"/>
</dbReference>
<dbReference type="GO" id="GO:0002181">
    <property type="term" value="P:cytoplasmic translation"/>
    <property type="evidence" value="ECO:0007669"/>
    <property type="project" value="TreeGrafter"/>
</dbReference>
<dbReference type="FunFam" id="2.30.30.30:FF:000001">
    <property type="entry name" value="50S ribosomal protein L2"/>
    <property type="match status" value="1"/>
</dbReference>
<dbReference type="FunFam" id="2.40.50.140:FF:000003">
    <property type="entry name" value="50S ribosomal protein L2"/>
    <property type="match status" value="1"/>
</dbReference>
<dbReference type="FunFam" id="4.10.950.10:FF:000001">
    <property type="entry name" value="50S ribosomal protein L2"/>
    <property type="match status" value="1"/>
</dbReference>
<dbReference type="Gene3D" id="2.30.30.30">
    <property type="match status" value="1"/>
</dbReference>
<dbReference type="Gene3D" id="2.40.50.140">
    <property type="entry name" value="Nucleic acid-binding proteins"/>
    <property type="match status" value="1"/>
</dbReference>
<dbReference type="Gene3D" id="4.10.950.10">
    <property type="entry name" value="Ribosomal protein L2, domain 3"/>
    <property type="match status" value="1"/>
</dbReference>
<dbReference type="HAMAP" id="MF_01320_B">
    <property type="entry name" value="Ribosomal_uL2_B"/>
    <property type="match status" value="1"/>
</dbReference>
<dbReference type="InterPro" id="IPR012340">
    <property type="entry name" value="NA-bd_OB-fold"/>
</dbReference>
<dbReference type="InterPro" id="IPR014722">
    <property type="entry name" value="Rib_uL2_dom2"/>
</dbReference>
<dbReference type="InterPro" id="IPR002171">
    <property type="entry name" value="Ribosomal_uL2"/>
</dbReference>
<dbReference type="InterPro" id="IPR005880">
    <property type="entry name" value="Ribosomal_uL2_bac/org-type"/>
</dbReference>
<dbReference type="InterPro" id="IPR022669">
    <property type="entry name" value="Ribosomal_uL2_C"/>
</dbReference>
<dbReference type="InterPro" id="IPR022671">
    <property type="entry name" value="Ribosomal_uL2_CS"/>
</dbReference>
<dbReference type="InterPro" id="IPR014726">
    <property type="entry name" value="Ribosomal_uL2_dom3"/>
</dbReference>
<dbReference type="InterPro" id="IPR022666">
    <property type="entry name" value="Ribosomal_uL2_RNA-bd_dom"/>
</dbReference>
<dbReference type="InterPro" id="IPR008991">
    <property type="entry name" value="Translation_prot_SH3-like_sf"/>
</dbReference>
<dbReference type="NCBIfam" id="TIGR01171">
    <property type="entry name" value="rplB_bact"/>
    <property type="match status" value="1"/>
</dbReference>
<dbReference type="PANTHER" id="PTHR13691:SF5">
    <property type="entry name" value="LARGE RIBOSOMAL SUBUNIT PROTEIN UL2M"/>
    <property type="match status" value="1"/>
</dbReference>
<dbReference type="PANTHER" id="PTHR13691">
    <property type="entry name" value="RIBOSOMAL PROTEIN L2"/>
    <property type="match status" value="1"/>
</dbReference>
<dbReference type="Pfam" id="PF00181">
    <property type="entry name" value="Ribosomal_L2"/>
    <property type="match status" value="1"/>
</dbReference>
<dbReference type="Pfam" id="PF03947">
    <property type="entry name" value="Ribosomal_L2_C"/>
    <property type="match status" value="1"/>
</dbReference>
<dbReference type="PIRSF" id="PIRSF002158">
    <property type="entry name" value="Ribosomal_L2"/>
    <property type="match status" value="1"/>
</dbReference>
<dbReference type="SMART" id="SM01383">
    <property type="entry name" value="Ribosomal_L2"/>
    <property type="match status" value="1"/>
</dbReference>
<dbReference type="SMART" id="SM01382">
    <property type="entry name" value="Ribosomal_L2_C"/>
    <property type="match status" value="1"/>
</dbReference>
<dbReference type="SUPFAM" id="SSF50249">
    <property type="entry name" value="Nucleic acid-binding proteins"/>
    <property type="match status" value="1"/>
</dbReference>
<dbReference type="SUPFAM" id="SSF50104">
    <property type="entry name" value="Translation proteins SH3-like domain"/>
    <property type="match status" value="1"/>
</dbReference>
<dbReference type="PROSITE" id="PS00467">
    <property type="entry name" value="RIBOSOMAL_L2"/>
    <property type="match status" value="1"/>
</dbReference>
<name>RL2_ACET2</name>
<feature type="chain" id="PRO_0000309905" description="Large ribosomal subunit protein uL2">
    <location>
        <begin position="1"/>
        <end position="275"/>
    </location>
</feature>
<feature type="region of interest" description="Disordered" evidence="2">
    <location>
        <begin position="224"/>
        <end position="275"/>
    </location>
</feature>
<feature type="compositionally biased region" description="Basic and acidic residues" evidence="2">
    <location>
        <begin position="264"/>
        <end position="275"/>
    </location>
</feature>
<reference key="1">
    <citation type="submission" date="2007-02" db="EMBL/GenBank/DDBJ databases">
        <title>Complete sequence of Clostridium thermocellum ATCC 27405.</title>
        <authorList>
            <consortium name="US DOE Joint Genome Institute"/>
            <person name="Copeland A."/>
            <person name="Lucas S."/>
            <person name="Lapidus A."/>
            <person name="Barry K."/>
            <person name="Detter J.C."/>
            <person name="Glavina del Rio T."/>
            <person name="Hammon N."/>
            <person name="Israni S."/>
            <person name="Dalin E."/>
            <person name="Tice H."/>
            <person name="Pitluck S."/>
            <person name="Chertkov O."/>
            <person name="Brettin T."/>
            <person name="Bruce D."/>
            <person name="Han C."/>
            <person name="Tapia R."/>
            <person name="Gilna P."/>
            <person name="Schmutz J."/>
            <person name="Larimer F."/>
            <person name="Land M."/>
            <person name="Hauser L."/>
            <person name="Kyrpides N."/>
            <person name="Mikhailova N."/>
            <person name="Wu J.H.D."/>
            <person name="Newcomb M."/>
            <person name="Richardson P."/>
        </authorList>
    </citation>
    <scope>NUCLEOTIDE SEQUENCE [LARGE SCALE GENOMIC DNA]</scope>
    <source>
        <strain>ATCC 27405 / DSM 1237 / JCM 9322 / NBRC 103400 / NCIMB 10682 / NRRL B-4536 / VPI 7372</strain>
    </source>
</reference>
<evidence type="ECO:0000255" key="1">
    <source>
        <dbReference type="HAMAP-Rule" id="MF_01320"/>
    </source>
</evidence>
<evidence type="ECO:0000256" key="2">
    <source>
        <dbReference type="SAM" id="MobiDB-lite"/>
    </source>
</evidence>
<evidence type="ECO:0000305" key="3"/>
<gene>
    <name evidence="1" type="primary">rplB</name>
    <name type="ordered locus">Cthe_2906</name>
</gene>
<accession>A3DJH5</accession>
<proteinExistence type="inferred from homology"/>
<sequence>MPVKKYNPTSPGTRFMTVSTFEEITKKEPEKSLLAPLKKTGGRNSYGRITVRHHGGGAKRKYRIIDFKRDKDGIKAKVAAIEYDPNRTAYIALLHYVDGEKRYIIAPHGLKVGDIVESGENADIKPGNALPLENIPVGTEIHNIELKPGKGGQLVRSAGNVAQLMAKEGNYAQIRLPSGEVRMVSLKCKATIGQVGNIDHENVSIGKAGRKRWMGIRPTVRGVVMNPVDHPHGGGEGKSPIGRPSPVTPWGKPTLGYKTRKKNKASDKFIIKRRK</sequence>
<protein>
    <recommendedName>
        <fullName evidence="1">Large ribosomal subunit protein uL2</fullName>
    </recommendedName>
    <alternativeName>
        <fullName evidence="3">50S ribosomal protein L2</fullName>
    </alternativeName>
</protein>
<keyword id="KW-1185">Reference proteome</keyword>
<keyword id="KW-0687">Ribonucleoprotein</keyword>
<keyword id="KW-0689">Ribosomal protein</keyword>
<keyword id="KW-0694">RNA-binding</keyword>
<keyword id="KW-0699">rRNA-binding</keyword>